<name>SYK_YERPY</name>
<evidence type="ECO:0000255" key="1">
    <source>
        <dbReference type="HAMAP-Rule" id="MF_00252"/>
    </source>
</evidence>
<reference key="1">
    <citation type="submission" date="2008-02" db="EMBL/GenBank/DDBJ databases">
        <title>Complete sequence of Yersinia pseudotuberculosis YPIII.</title>
        <authorList>
            <consortium name="US DOE Joint Genome Institute"/>
            <person name="Copeland A."/>
            <person name="Lucas S."/>
            <person name="Lapidus A."/>
            <person name="Glavina del Rio T."/>
            <person name="Dalin E."/>
            <person name="Tice H."/>
            <person name="Bruce D."/>
            <person name="Goodwin L."/>
            <person name="Pitluck S."/>
            <person name="Munk A.C."/>
            <person name="Brettin T."/>
            <person name="Detter J.C."/>
            <person name="Han C."/>
            <person name="Tapia R."/>
            <person name="Schmutz J."/>
            <person name="Larimer F."/>
            <person name="Land M."/>
            <person name="Hauser L."/>
            <person name="Challacombe J.F."/>
            <person name="Green L."/>
            <person name="Lindler L.E."/>
            <person name="Nikolich M.P."/>
            <person name="Richardson P."/>
        </authorList>
    </citation>
    <scope>NUCLEOTIDE SEQUENCE [LARGE SCALE GENOMIC DNA]</scope>
    <source>
        <strain>YPIII</strain>
    </source>
</reference>
<keyword id="KW-0030">Aminoacyl-tRNA synthetase</keyword>
<keyword id="KW-0067">ATP-binding</keyword>
<keyword id="KW-0963">Cytoplasm</keyword>
<keyword id="KW-0436">Ligase</keyword>
<keyword id="KW-0460">Magnesium</keyword>
<keyword id="KW-0479">Metal-binding</keyword>
<keyword id="KW-0547">Nucleotide-binding</keyword>
<keyword id="KW-0648">Protein biosynthesis</keyword>
<feature type="chain" id="PRO_1000101165" description="Lysine--tRNA ligase">
    <location>
        <begin position="1"/>
        <end position="505"/>
    </location>
</feature>
<feature type="binding site" evidence="1">
    <location>
        <position position="415"/>
    </location>
    <ligand>
        <name>Mg(2+)</name>
        <dbReference type="ChEBI" id="CHEBI:18420"/>
        <label>1</label>
    </ligand>
</feature>
<feature type="binding site" evidence="1">
    <location>
        <position position="422"/>
    </location>
    <ligand>
        <name>Mg(2+)</name>
        <dbReference type="ChEBI" id="CHEBI:18420"/>
        <label>1</label>
    </ligand>
</feature>
<feature type="binding site" evidence="1">
    <location>
        <position position="422"/>
    </location>
    <ligand>
        <name>Mg(2+)</name>
        <dbReference type="ChEBI" id="CHEBI:18420"/>
        <label>2</label>
    </ligand>
</feature>
<gene>
    <name evidence="1" type="primary">lysS</name>
    <name type="ordered locus">YPK_0924</name>
</gene>
<sequence>MSEQKPQVAEQAQELNSELQARREKLAVLRGKGIAFPNDFRRENLSDQLHAEFDSKENEELEALNIDVTVAGRMMTRRIMGKASFVTLQDVGGRIQLYVSRDDLPEGVYNEEFKKWDLGDILGARGKLFKTKTGELSIHCSELRLLTKALRPLPDKFHGLADQETRYRQRYLDLIANDESRHTFKVRSQVMSGIRSFMVEKGFMEVETPMMQVIPGGASARPFVTHHNALDIDMYLRIAPELYLKRLVVGGFERVFEINRNFRNEGVSPRHNPEFTMMELYMAYADYKDLIVLTEELFRTLTETILGSSVVQYGEQTFDFGKPFAKLTMKEAICKYRPETNVADLDDMDKAVAIAESLGIKVEKSWGLGRIQCEIFEETAESHLIQPTFITEYPAEVSPLARRNDDNPFITDRFEFFIGGREIGNGFSELNDAEDQAQRFADQVSAKEAGDDEAMFYDEDYITALEHGLPPTAGLGIGIDRMVMLFTNSHTIRDVILFPAMRPVK</sequence>
<proteinExistence type="inferred from homology"/>
<protein>
    <recommendedName>
        <fullName evidence="1">Lysine--tRNA ligase</fullName>
        <ecNumber evidence="1">6.1.1.6</ecNumber>
    </recommendedName>
    <alternativeName>
        <fullName evidence="1">Lysyl-tRNA synthetase</fullName>
        <shortName evidence="1">LysRS</shortName>
    </alternativeName>
</protein>
<accession>B1JPH6</accession>
<dbReference type="EC" id="6.1.1.6" evidence="1"/>
<dbReference type="EMBL" id="CP000950">
    <property type="protein sequence ID" value="ACA67225.1"/>
    <property type="molecule type" value="Genomic_DNA"/>
</dbReference>
<dbReference type="RefSeq" id="WP_002209930.1">
    <property type="nucleotide sequence ID" value="NZ_CP009792.1"/>
</dbReference>
<dbReference type="SMR" id="B1JPH6"/>
<dbReference type="GeneID" id="57973752"/>
<dbReference type="KEGG" id="ypy:YPK_0924"/>
<dbReference type="PATRIC" id="fig|502800.11.peg.1551"/>
<dbReference type="GO" id="GO:0005829">
    <property type="term" value="C:cytosol"/>
    <property type="evidence" value="ECO:0007669"/>
    <property type="project" value="TreeGrafter"/>
</dbReference>
<dbReference type="GO" id="GO:0005524">
    <property type="term" value="F:ATP binding"/>
    <property type="evidence" value="ECO:0007669"/>
    <property type="project" value="UniProtKB-UniRule"/>
</dbReference>
<dbReference type="GO" id="GO:0004824">
    <property type="term" value="F:lysine-tRNA ligase activity"/>
    <property type="evidence" value="ECO:0007669"/>
    <property type="project" value="UniProtKB-UniRule"/>
</dbReference>
<dbReference type="GO" id="GO:0000287">
    <property type="term" value="F:magnesium ion binding"/>
    <property type="evidence" value="ECO:0007669"/>
    <property type="project" value="UniProtKB-UniRule"/>
</dbReference>
<dbReference type="GO" id="GO:0000049">
    <property type="term" value="F:tRNA binding"/>
    <property type="evidence" value="ECO:0007669"/>
    <property type="project" value="TreeGrafter"/>
</dbReference>
<dbReference type="GO" id="GO:0006430">
    <property type="term" value="P:lysyl-tRNA aminoacylation"/>
    <property type="evidence" value="ECO:0007669"/>
    <property type="project" value="UniProtKB-UniRule"/>
</dbReference>
<dbReference type="CDD" id="cd00775">
    <property type="entry name" value="LysRS_core"/>
    <property type="match status" value="1"/>
</dbReference>
<dbReference type="CDD" id="cd04322">
    <property type="entry name" value="LysRS_N"/>
    <property type="match status" value="1"/>
</dbReference>
<dbReference type="FunFam" id="2.40.50.140:FF:000024">
    <property type="entry name" value="Lysine--tRNA ligase"/>
    <property type="match status" value="1"/>
</dbReference>
<dbReference type="FunFam" id="3.30.930.10:FF:000001">
    <property type="entry name" value="Lysine--tRNA ligase"/>
    <property type="match status" value="1"/>
</dbReference>
<dbReference type="Gene3D" id="3.30.930.10">
    <property type="entry name" value="Bira Bifunctional Protein, Domain 2"/>
    <property type="match status" value="1"/>
</dbReference>
<dbReference type="Gene3D" id="2.40.50.140">
    <property type="entry name" value="Nucleic acid-binding proteins"/>
    <property type="match status" value="1"/>
</dbReference>
<dbReference type="HAMAP" id="MF_00252">
    <property type="entry name" value="Lys_tRNA_synth_class2"/>
    <property type="match status" value="1"/>
</dbReference>
<dbReference type="InterPro" id="IPR004364">
    <property type="entry name" value="Aa-tRNA-synt_II"/>
</dbReference>
<dbReference type="InterPro" id="IPR006195">
    <property type="entry name" value="aa-tRNA-synth_II"/>
</dbReference>
<dbReference type="InterPro" id="IPR045864">
    <property type="entry name" value="aa-tRNA-synth_II/BPL/LPL"/>
</dbReference>
<dbReference type="InterPro" id="IPR002313">
    <property type="entry name" value="Lys-tRNA-ligase_II"/>
</dbReference>
<dbReference type="InterPro" id="IPR034762">
    <property type="entry name" value="Lys-tRNA-ligase_II_bac/euk"/>
</dbReference>
<dbReference type="InterPro" id="IPR044136">
    <property type="entry name" value="Lys-tRNA-ligase_II_N"/>
</dbReference>
<dbReference type="InterPro" id="IPR018149">
    <property type="entry name" value="Lys-tRNA-synth_II_C"/>
</dbReference>
<dbReference type="InterPro" id="IPR012340">
    <property type="entry name" value="NA-bd_OB-fold"/>
</dbReference>
<dbReference type="InterPro" id="IPR004365">
    <property type="entry name" value="NA-bd_OB_tRNA"/>
</dbReference>
<dbReference type="NCBIfam" id="TIGR00499">
    <property type="entry name" value="lysS_bact"/>
    <property type="match status" value="1"/>
</dbReference>
<dbReference type="NCBIfam" id="NF001756">
    <property type="entry name" value="PRK00484.1"/>
    <property type="match status" value="1"/>
</dbReference>
<dbReference type="PANTHER" id="PTHR42918:SF15">
    <property type="entry name" value="LYSINE--TRNA LIGASE, CHLOROPLASTIC_MITOCHONDRIAL"/>
    <property type="match status" value="1"/>
</dbReference>
<dbReference type="PANTHER" id="PTHR42918">
    <property type="entry name" value="LYSYL-TRNA SYNTHETASE"/>
    <property type="match status" value="1"/>
</dbReference>
<dbReference type="Pfam" id="PF00152">
    <property type="entry name" value="tRNA-synt_2"/>
    <property type="match status" value="1"/>
</dbReference>
<dbReference type="Pfam" id="PF01336">
    <property type="entry name" value="tRNA_anti-codon"/>
    <property type="match status" value="1"/>
</dbReference>
<dbReference type="PIRSF" id="PIRSF039101">
    <property type="entry name" value="LysRS2"/>
    <property type="match status" value="1"/>
</dbReference>
<dbReference type="PRINTS" id="PR00982">
    <property type="entry name" value="TRNASYNTHLYS"/>
</dbReference>
<dbReference type="SUPFAM" id="SSF55681">
    <property type="entry name" value="Class II aaRS and biotin synthetases"/>
    <property type="match status" value="1"/>
</dbReference>
<dbReference type="SUPFAM" id="SSF50249">
    <property type="entry name" value="Nucleic acid-binding proteins"/>
    <property type="match status" value="1"/>
</dbReference>
<dbReference type="PROSITE" id="PS50862">
    <property type="entry name" value="AA_TRNA_LIGASE_II"/>
    <property type="match status" value="1"/>
</dbReference>
<organism>
    <name type="scientific">Yersinia pseudotuberculosis serotype O:3 (strain YPIII)</name>
    <dbReference type="NCBI Taxonomy" id="502800"/>
    <lineage>
        <taxon>Bacteria</taxon>
        <taxon>Pseudomonadati</taxon>
        <taxon>Pseudomonadota</taxon>
        <taxon>Gammaproteobacteria</taxon>
        <taxon>Enterobacterales</taxon>
        <taxon>Yersiniaceae</taxon>
        <taxon>Yersinia</taxon>
    </lineage>
</organism>
<comment type="catalytic activity">
    <reaction evidence="1">
        <text>tRNA(Lys) + L-lysine + ATP = L-lysyl-tRNA(Lys) + AMP + diphosphate</text>
        <dbReference type="Rhea" id="RHEA:20792"/>
        <dbReference type="Rhea" id="RHEA-COMP:9696"/>
        <dbReference type="Rhea" id="RHEA-COMP:9697"/>
        <dbReference type="ChEBI" id="CHEBI:30616"/>
        <dbReference type="ChEBI" id="CHEBI:32551"/>
        <dbReference type="ChEBI" id="CHEBI:33019"/>
        <dbReference type="ChEBI" id="CHEBI:78442"/>
        <dbReference type="ChEBI" id="CHEBI:78529"/>
        <dbReference type="ChEBI" id="CHEBI:456215"/>
        <dbReference type="EC" id="6.1.1.6"/>
    </reaction>
</comment>
<comment type="cofactor">
    <cofactor evidence="1">
        <name>Mg(2+)</name>
        <dbReference type="ChEBI" id="CHEBI:18420"/>
    </cofactor>
    <text evidence="1">Binds 3 Mg(2+) ions per subunit.</text>
</comment>
<comment type="subunit">
    <text evidence="1">Homodimer.</text>
</comment>
<comment type="subcellular location">
    <subcellularLocation>
        <location evidence="1">Cytoplasm</location>
    </subcellularLocation>
</comment>
<comment type="similarity">
    <text evidence="1">Belongs to the class-II aminoacyl-tRNA synthetase family.</text>
</comment>